<accession>Q8DDV5</accession>
<sequence length="90" mass="10057">MARVTVQDAVEKVGNRFDLVLIAARRARQMQTGGKDSLVPEENDKPTVIALREIEEGLITKEVLDARERQEQQEQEAAELAAVSSIARNR</sequence>
<keyword id="KW-0240">DNA-directed RNA polymerase</keyword>
<keyword id="KW-0548">Nucleotidyltransferase</keyword>
<keyword id="KW-0804">Transcription</keyword>
<keyword id="KW-0808">Transferase</keyword>
<proteinExistence type="inferred from homology"/>
<reference key="1">
    <citation type="submission" date="2002-12" db="EMBL/GenBank/DDBJ databases">
        <title>Complete genome sequence of Vibrio vulnificus CMCP6.</title>
        <authorList>
            <person name="Rhee J.H."/>
            <person name="Kim S.Y."/>
            <person name="Chung S.S."/>
            <person name="Kim J.J."/>
            <person name="Moon Y.H."/>
            <person name="Jeong H."/>
            <person name="Choy H.E."/>
        </authorList>
    </citation>
    <scope>NUCLEOTIDE SEQUENCE [LARGE SCALE GENOMIC DNA]</scope>
    <source>
        <strain>CMCP6</strain>
    </source>
</reference>
<dbReference type="EC" id="2.7.7.6" evidence="1"/>
<dbReference type="EMBL" id="AE016795">
    <property type="protein sequence ID" value="AAO09354.1"/>
    <property type="molecule type" value="Genomic_DNA"/>
</dbReference>
<dbReference type="RefSeq" id="WP_011078919.1">
    <property type="nucleotide sequence ID" value="NC_004459.3"/>
</dbReference>
<dbReference type="SMR" id="Q8DDV5"/>
<dbReference type="KEGG" id="vvu:VV1_0851"/>
<dbReference type="HOGENOM" id="CLU_125406_5_3_6"/>
<dbReference type="Proteomes" id="UP000002275">
    <property type="component" value="Chromosome 1"/>
</dbReference>
<dbReference type="GO" id="GO:0000428">
    <property type="term" value="C:DNA-directed RNA polymerase complex"/>
    <property type="evidence" value="ECO:0007669"/>
    <property type="project" value="UniProtKB-KW"/>
</dbReference>
<dbReference type="GO" id="GO:0003677">
    <property type="term" value="F:DNA binding"/>
    <property type="evidence" value="ECO:0007669"/>
    <property type="project" value="UniProtKB-UniRule"/>
</dbReference>
<dbReference type="GO" id="GO:0003899">
    <property type="term" value="F:DNA-directed RNA polymerase activity"/>
    <property type="evidence" value="ECO:0007669"/>
    <property type="project" value="UniProtKB-UniRule"/>
</dbReference>
<dbReference type="GO" id="GO:0006351">
    <property type="term" value="P:DNA-templated transcription"/>
    <property type="evidence" value="ECO:0007669"/>
    <property type="project" value="UniProtKB-UniRule"/>
</dbReference>
<dbReference type="FunFam" id="3.90.940.10:FF:000001">
    <property type="entry name" value="DNA-directed RNA polymerase subunit omega"/>
    <property type="match status" value="1"/>
</dbReference>
<dbReference type="Gene3D" id="3.90.940.10">
    <property type="match status" value="1"/>
</dbReference>
<dbReference type="HAMAP" id="MF_00366">
    <property type="entry name" value="RNApol_bact_RpoZ"/>
    <property type="match status" value="1"/>
</dbReference>
<dbReference type="InterPro" id="IPR003716">
    <property type="entry name" value="DNA-dir_RNA_pol_omega"/>
</dbReference>
<dbReference type="InterPro" id="IPR006110">
    <property type="entry name" value="Pol_omega/Rpo6/RPB6"/>
</dbReference>
<dbReference type="InterPro" id="IPR036161">
    <property type="entry name" value="RPB6/omega-like_sf"/>
</dbReference>
<dbReference type="NCBIfam" id="TIGR00690">
    <property type="entry name" value="rpoZ"/>
    <property type="match status" value="1"/>
</dbReference>
<dbReference type="PANTHER" id="PTHR34476">
    <property type="entry name" value="DNA-DIRECTED RNA POLYMERASE SUBUNIT OMEGA"/>
    <property type="match status" value="1"/>
</dbReference>
<dbReference type="PANTHER" id="PTHR34476:SF1">
    <property type="entry name" value="DNA-DIRECTED RNA POLYMERASE SUBUNIT OMEGA"/>
    <property type="match status" value="1"/>
</dbReference>
<dbReference type="Pfam" id="PF01192">
    <property type="entry name" value="RNA_pol_Rpb6"/>
    <property type="match status" value="1"/>
</dbReference>
<dbReference type="SMART" id="SM01409">
    <property type="entry name" value="RNA_pol_Rpb6"/>
    <property type="match status" value="1"/>
</dbReference>
<dbReference type="SUPFAM" id="SSF63562">
    <property type="entry name" value="RPB6/omega subunit-like"/>
    <property type="match status" value="1"/>
</dbReference>
<protein>
    <recommendedName>
        <fullName evidence="1">DNA-directed RNA polymerase subunit omega</fullName>
        <shortName evidence="1">RNAP omega subunit</shortName>
        <ecNumber evidence="1">2.7.7.6</ecNumber>
    </recommendedName>
    <alternativeName>
        <fullName evidence="1">RNA polymerase omega subunit</fullName>
    </alternativeName>
    <alternativeName>
        <fullName evidence="1">Transcriptase subunit omega</fullName>
    </alternativeName>
</protein>
<gene>
    <name evidence="1" type="primary">rpoZ</name>
    <name type="ordered locus">VV1_0851</name>
</gene>
<comment type="function">
    <text evidence="1">Promotes RNA polymerase assembly. Latches the N- and C-terminal regions of the beta' subunit thereby facilitating its interaction with the beta and alpha subunits.</text>
</comment>
<comment type="catalytic activity">
    <reaction evidence="1">
        <text>RNA(n) + a ribonucleoside 5'-triphosphate = RNA(n+1) + diphosphate</text>
        <dbReference type="Rhea" id="RHEA:21248"/>
        <dbReference type="Rhea" id="RHEA-COMP:14527"/>
        <dbReference type="Rhea" id="RHEA-COMP:17342"/>
        <dbReference type="ChEBI" id="CHEBI:33019"/>
        <dbReference type="ChEBI" id="CHEBI:61557"/>
        <dbReference type="ChEBI" id="CHEBI:140395"/>
        <dbReference type="EC" id="2.7.7.6"/>
    </reaction>
</comment>
<comment type="subunit">
    <text evidence="1">The RNAP catalytic core consists of 2 alpha, 1 beta, 1 beta' and 1 omega subunit. When a sigma factor is associated with the core the holoenzyme is formed, which can initiate transcription.</text>
</comment>
<comment type="similarity">
    <text evidence="1">Belongs to the RNA polymerase subunit omega family.</text>
</comment>
<name>RPOZ_VIBVU</name>
<organism>
    <name type="scientific">Vibrio vulnificus (strain CMCP6)</name>
    <dbReference type="NCBI Taxonomy" id="216895"/>
    <lineage>
        <taxon>Bacteria</taxon>
        <taxon>Pseudomonadati</taxon>
        <taxon>Pseudomonadota</taxon>
        <taxon>Gammaproteobacteria</taxon>
        <taxon>Vibrionales</taxon>
        <taxon>Vibrionaceae</taxon>
        <taxon>Vibrio</taxon>
    </lineage>
</organism>
<evidence type="ECO:0000255" key="1">
    <source>
        <dbReference type="HAMAP-Rule" id="MF_00366"/>
    </source>
</evidence>
<evidence type="ECO:0000256" key="2">
    <source>
        <dbReference type="SAM" id="MobiDB-lite"/>
    </source>
</evidence>
<feature type="chain" id="PRO_0000129011" description="DNA-directed RNA polymerase subunit omega">
    <location>
        <begin position="1"/>
        <end position="90"/>
    </location>
</feature>
<feature type="region of interest" description="Disordered" evidence="2">
    <location>
        <begin position="69"/>
        <end position="90"/>
    </location>
</feature>